<evidence type="ECO:0000255" key="1">
    <source>
        <dbReference type="HAMAP-Rule" id="MF_01308"/>
    </source>
</evidence>
<evidence type="ECO:0000305" key="2"/>
<organism>
    <name type="scientific">Pyropia yezoensis</name>
    <name type="common">Susabi-nori</name>
    <name type="synonym">Porphyra yezoensis</name>
    <dbReference type="NCBI Taxonomy" id="2788"/>
    <lineage>
        <taxon>Eukaryota</taxon>
        <taxon>Rhodophyta</taxon>
        <taxon>Bangiophyceae</taxon>
        <taxon>Bangiales</taxon>
        <taxon>Bangiaceae</taxon>
        <taxon>Pyropia</taxon>
    </lineage>
</organism>
<feature type="chain" id="PRO_0000275254" description="Potassium/proton antiporter CemA">
    <location>
        <begin position="1"/>
        <end position="278"/>
    </location>
</feature>
<feature type="transmembrane region" description="Helical" evidence="1">
    <location>
        <begin position="61"/>
        <end position="81"/>
    </location>
</feature>
<feature type="transmembrane region" description="Helical" evidence="1">
    <location>
        <begin position="155"/>
        <end position="175"/>
    </location>
</feature>
<feature type="transmembrane region" description="Helical" evidence="1">
    <location>
        <begin position="203"/>
        <end position="223"/>
    </location>
</feature>
<feature type="transmembrane region" description="Helical" evidence="1">
    <location>
        <begin position="238"/>
        <end position="258"/>
    </location>
</feature>
<geneLocation type="chloroplast"/>
<proteinExistence type="inferred from homology"/>
<dbReference type="EMBL" id="AP006715">
    <property type="protein sequence ID" value="BAE92356.1"/>
    <property type="molecule type" value="Genomic_DNA"/>
</dbReference>
<dbReference type="RefSeq" id="YP_536913.1">
    <property type="nucleotide sequence ID" value="NC_007932.1"/>
</dbReference>
<dbReference type="SMR" id="Q1XDQ5"/>
<dbReference type="GeneID" id="3978909"/>
<dbReference type="GO" id="GO:0009706">
    <property type="term" value="C:chloroplast inner membrane"/>
    <property type="evidence" value="ECO:0007669"/>
    <property type="project" value="UniProtKB-SubCell"/>
</dbReference>
<dbReference type="GO" id="GO:0015297">
    <property type="term" value="F:antiporter activity"/>
    <property type="evidence" value="ECO:0007669"/>
    <property type="project" value="UniProtKB-KW"/>
</dbReference>
<dbReference type="GO" id="GO:0015078">
    <property type="term" value="F:proton transmembrane transporter activity"/>
    <property type="evidence" value="ECO:0007669"/>
    <property type="project" value="UniProtKB-UniRule"/>
</dbReference>
<dbReference type="GO" id="GO:0006813">
    <property type="term" value="P:potassium ion transport"/>
    <property type="evidence" value="ECO:0007669"/>
    <property type="project" value="UniProtKB-UniRule"/>
</dbReference>
<dbReference type="HAMAP" id="MF_01308">
    <property type="entry name" value="CemA_PxcA"/>
    <property type="match status" value="1"/>
</dbReference>
<dbReference type="InterPro" id="IPR004282">
    <property type="entry name" value="CemA"/>
</dbReference>
<dbReference type="PANTHER" id="PTHR33650:SF2">
    <property type="entry name" value="CHLOROPLAST ENVELOPE MEMBRANE PROTEIN"/>
    <property type="match status" value="1"/>
</dbReference>
<dbReference type="PANTHER" id="PTHR33650">
    <property type="entry name" value="CHLOROPLAST ENVELOPE MEMBRANE PROTEIN-RELATED"/>
    <property type="match status" value="1"/>
</dbReference>
<dbReference type="Pfam" id="PF03040">
    <property type="entry name" value="CemA"/>
    <property type="match status" value="1"/>
</dbReference>
<gene>
    <name evidence="1" type="primary">cemA</name>
</gene>
<accession>Q1XDQ5</accession>
<comment type="function">
    <text evidence="1">Contributes to K(+)/H(+) antiport activity by supporting proton efflux to control proton extrusion and homeostasis in chloroplasts in a light-dependent manner to modulate photosynthesis. Prevents excessive induction of non-photochemical quenching (NPQ) under continuous-light conditions. Indirectly promotes efficient inorganic carbon uptake into chloroplasts.</text>
</comment>
<comment type="catalytic activity">
    <reaction evidence="1">
        <text>K(+)(in) + H(+)(out) = K(+)(out) + H(+)(in)</text>
        <dbReference type="Rhea" id="RHEA:29467"/>
        <dbReference type="ChEBI" id="CHEBI:15378"/>
        <dbReference type="ChEBI" id="CHEBI:29103"/>
    </reaction>
</comment>
<comment type="subcellular location">
    <subcellularLocation>
        <location evidence="1">Plastid</location>
        <location evidence="1">Chloroplast inner membrane</location>
        <topology evidence="1">Multi-pass membrane protein</topology>
    </subcellularLocation>
</comment>
<comment type="similarity">
    <text evidence="1 2">Belongs to the CemA family.</text>
</comment>
<sequence length="278" mass="32539">MKYWNLKRNNQFAFEKVGPIPRSITNTFEKFRKELDPNGESEAIEEFRISRHQTITSVKYILLLFISPVLVNQASKFFVFGPCIDYLWNQEQPKIFLNSSQEERAFAELQRFEEKIHFEVLLNPSEDISYEIIEKRVQLKARELGEYYANESANAVKNILSDLVSILVFILLMITGQRQIAVVKSFLNEIIYGLSDTAKAFLIILFTDMFVGFHSPHGWEVIIEVILRHLGLPESRDFIFLFISTFPVILDTIFKYWIFRYLNQVSPSAVATYHNMNE</sequence>
<protein>
    <recommendedName>
        <fullName evidence="1">Potassium/proton antiporter CemA</fullName>
    </recommendedName>
    <alternativeName>
        <fullName evidence="1">Chloroplast envelope membrane protein A</fullName>
        <shortName evidence="1">CemA</shortName>
    </alternativeName>
</protein>
<keyword id="KW-0050">Antiport</keyword>
<keyword id="KW-0150">Chloroplast</keyword>
<keyword id="KW-0375">Hydrogen ion transport</keyword>
<keyword id="KW-0406">Ion transport</keyword>
<keyword id="KW-0472">Membrane</keyword>
<keyword id="KW-0934">Plastid</keyword>
<keyword id="KW-1001">Plastid inner membrane</keyword>
<keyword id="KW-0630">Potassium</keyword>
<keyword id="KW-0633">Potassium transport</keyword>
<keyword id="KW-0812">Transmembrane</keyword>
<keyword id="KW-1133">Transmembrane helix</keyword>
<keyword id="KW-0813">Transport</keyword>
<reference key="1">
    <citation type="submission" date="2003-11" db="EMBL/GenBank/DDBJ databases">
        <title>Whole genome sequence of Porphyra yezoensis chloroplast.</title>
        <authorList>
            <person name="Kunimoto M."/>
            <person name="Morishima K."/>
            <person name="Yoshikawa M."/>
            <person name="Fukuda S."/>
            <person name="Kobayashi T."/>
            <person name="Kobayashi M."/>
            <person name="Okazaki T."/>
            <person name="Ohara I."/>
            <person name="Nakayama I."/>
        </authorList>
    </citation>
    <scope>NUCLEOTIDE SEQUENCE [LARGE SCALE GENOMIC DNA]</scope>
    <source>
        <strain>U-51</strain>
    </source>
</reference>
<name>CEMA_PYRYE</name>